<comment type="function">
    <text evidence="1">Essential for recycling GMP and indirectly, cGMP.</text>
</comment>
<comment type="catalytic activity">
    <reaction>
        <text>GMP + ATP = GDP + ADP</text>
        <dbReference type="Rhea" id="RHEA:20780"/>
        <dbReference type="ChEBI" id="CHEBI:30616"/>
        <dbReference type="ChEBI" id="CHEBI:58115"/>
        <dbReference type="ChEBI" id="CHEBI:58189"/>
        <dbReference type="ChEBI" id="CHEBI:456216"/>
        <dbReference type="EC" id="2.7.4.8"/>
    </reaction>
</comment>
<comment type="subcellular location">
    <subcellularLocation>
        <location evidence="1">Cytoplasm</location>
    </subcellularLocation>
</comment>
<comment type="similarity">
    <text evidence="2">Belongs to the guanylate kinase family.</text>
</comment>
<gene>
    <name type="primary">gmk</name>
    <name type="ordered locus">MYCGA6400</name>
    <name type="ORF">MGA_0462</name>
</gene>
<evidence type="ECO:0000250" key="1"/>
<evidence type="ECO:0000305" key="2"/>
<feature type="chain" id="PRO_0000170561" description="Guanylate kinase">
    <location>
        <begin position="1"/>
        <end position="195"/>
    </location>
</feature>
<feature type="domain" description="Guanylate kinase-like">
    <location>
        <begin position="12"/>
        <end position="191"/>
    </location>
</feature>
<feature type="binding site" evidence="1">
    <location>
        <begin position="19"/>
        <end position="26"/>
    </location>
    <ligand>
        <name>ATP</name>
        <dbReference type="ChEBI" id="CHEBI:30616"/>
    </ligand>
</feature>
<feature type="sequence conflict" description="In Ref. 1; AAF36761." evidence="2" ref="1">
    <original>R</original>
    <variation>K</variation>
    <location>
        <position position="120"/>
    </location>
</feature>
<feature type="sequence conflict" description="In Ref. 1; AAF36761." evidence="2" ref="1">
    <original>L</original>
    <variation>R</variation>
    <location>
        <position position="191"/>
    </location>
</feature>
<feature type="sequence conflict" description="In Ref. 1; AAF36761." evidence="2" ref="1">
    <original>N</original>
    <variation>S</variation>
    <location>
        <position position="194"/>
    </location>
</feature>
<sequence>MVVIYIMSNKQGLIILISGPSGVGKGTIVSRLLSDNNLKLNVSISATTRKKRASEVEGVHYFFKTKEEFEQMIANNQLLEYANYVNNYYGTPLSLVKEILDKNENLILEIEYQGVIQVLRKGFRTLSIFVLPPSEDELVARLKKRGTENDEVIKHRLEQAVKEYAHRELYDHTIINDDLEKTIEDIKQLILKYNQ</sequence>
<organism>
    <name type="scientific">Mycoplasmoides gallisepticum (strain R(low / passage 15 / clone 2))</name>
    <name type="common">Mycoplasma gallisepticum</name>
    <dbReference type="NCBI Taxonomy" id="710127"/>
    <lineage>
        <taxon>Bacteria</taxon>
        <taxon>Bacillati</taxon>
        <taxon>Mycoplasmatota</taxon>
        <taxon>Mycoplasmoidales</taxon>
        <taxon>Mycoplasmoidaceae</taxon>
        <taxon>Mycoplasmoides</taxon>
    </lineage>
</organism>
<name>KGUA_MYCGA</name>
<dbReference type="EC" id="2.7.4.8"/>
<dbReference type="EMBL" id="L35043">
    <property type="protein sequence ID" value="AAF36761.1"/>
    <property type="molecule type" value="Genomic_DNA"/>
</dbReference>
<dbReference type="EMBL" id="AE015450">
    <property type="protein sequence ID" value="AAP56990.1"/>
    <property type="molecule type" value="Genomic_DNA"/>
</dbReference>
<dbReference type="RefSeq" id="WP_011113900.1">
    <property type="nucleotide sequence ID" value="NC_004829.2"/>
</dbReference>
<dbReference type="SMR" id="Q9KX62"/>
<dbReference type="KEGG" id="mga:MGA_0462"/>
<dbReference type="PATRIC" id="fig|233150.7.peg.717"/>
<dbReference type="HOGENOM" id="CLU_001715_1_1_14"/>
<dbReference type="OrthoDB" id="9808150at2"/>
<dbReference type="Proteomes" id="UP000001418">
    <property type="component" value="Chromosome"/>
</dbReference>
<dbReference type="GO" id="GO:0005829">
    <property type="term" value="C:cytosol"/>
    <property type="evidence" value="ECO:0007669"/>
    <property type="project" value="TreeGrafter"/>
</dbReference>
<dbReference type="GO" id="GO:0005524">
    <property type="term" value="F:ATP binding"/>
    <property type="evidence" value="ECO:0007669"/>
    <property type="project" value="UniProtKB-UniRule"/>
</dbReference>
<dbReference type="GO" id="GO:0004385">
    <property type="term" value="F:guanylate kinase activity"/>
    <property type="evidence" value="ECO:0007669"/>
    <property type="project" value="UniProtKB-UniRule"/>
</dbReference>
<dbReference type="CDD" id="cd00071">
    <property type="entry name" value="GMPK"/>
    <property type="match status" value="1"/>
</dbReference>
<dbReference type="FunFam" id="3.30.63.10:FF:000002">
    <property type="entry name" value="Guanylate kinase 1"/>
    <property type="match status" value="1"/>
</dbReference>
<dbReference type="Gene3D" id="3.40.50.300">
    <property type="entry name" value="P-loop containing nucleotide triphosphate hydrolases"/>
    <property type="match status" value="1"/>
</dbReference>
<dbReference type="HAMAP" id="MF_00328">
    <property type="entry name" value="Guanylate_kinase"/>
    <property type="match status" value="1"/>
</dbReference>
<dbReference type="InterPro" id="IPR008145">
    <property type="entry name" value="GK/Ca_channel_bsu"/>
</dbReference>
<dbReference type="InterPro" id="IPR008144">
    <property type="entry name" value="Guanylate_kin-like_dom"/>
</dbReference>
<dbReference type="InterPro" id="IPR017665">
    <property type="entry name" value="Guanylate_kinase"/>
</dbReference>
<dbReference type="InterPro" id="IPR020590">
    <property type="entry name" value="Guanylate_kinase_CS"/>
</dbReference>
<dbReference type="InterPro" id="IPR027417">
    <property type="entry name" value="P-loop_NTPase"/>
</dbReference>
<dbReference type="NCBIfam" id="TIGR03263">
    <property type="entry name" value="guanyl_kin"/>
    <property type="match status" value="1"/>
</dbReference>
<dbReference type="PANTHER" id="PTHR23117:SF13">
    <property type="entry name" value="GUANYLATE KINASE"/>
    <property type="match status" value="1"/>
</dbReference>
<dbReference type="PANTHER" id="PTHR23117">
    <property type="entry name" value="GUANYLATE KINASE-RELATED"/>
    <property type="match status" value="1"/>
</dbReference>
<dbReference type="Pfam" id="PF00625">
    <property type="entry name" value="Guanylate_kin"/>
    <property type="match status" value="1"/>
</dbReference>
<dbReference type="SMART" id="SM00072">
    <property type="entry name" value="GuKc"/>
    <property type="match status" value="1"/>
</dbReference>
<dbReference type="SUPFAM" id="SSF52540">
    <property type="entry name" value="P-loop containing nucleoside triphosphate hydrolases"/>
    <property type="match status" value="1"/>
</dbReference>
<dbReference type="PROSITE" id="PS00856">
    <property type="entry name" value="GUANYLATE_KINASE_1"/>
    <property type="match status" value="1"/>
</dbReference>
<dbReference type="PROSITE" id="PS50052">
    <property type="entry name" value="GUANYLATE_KINASE_2"/>
    <property type="match status" value="1"/>
</dbReference>
<reference key="1">
    <citation type="submission" date="2000-02" db="EMBL/GenBank/DDBJ databases">
        <authorList>
            <person name="Skamrov A.V."/>
            <person name="Feoktistova E.S."/>
            <person name="Gol'dman M.A."/>
            <person name="Bibilashvili R.S."/>
        </authorList>
    </citation>
    <scope>NUCLEOTIDE SEQUENCE [GENOMIC DNA]</scope>
    <source>
        <strain>A5969Var.B</strain>
    </source>
</reference>
<reference key="2">
    <citation type="journal article" date="2003" name="Microbiology">
        <title>The complete genome sequence of the avian pathogen Mycoplasma gallisepticum strain R(low).</title>
        <authorList>
            <person name="Papazisi L."/>
            <person name="Gorton T.S."/>
            <person name="Kutish G."/>
            <person name="Markham P.F."/>
            <person name="Browning G.F."/>
            <person name="Nguyen D.K."/>
            <person name="Swartzell S."/>
            <person name="Madan A."/>
            <person name="Mahairas G."/>
            <person name="Geary S.J."/>
        </authorList>
    </citation>
    <scope>NUCLEOTIDE SEQUENCE [LARGE SCALE GENOMIC DNA]</scope>
    <source>
        <strain>R(low / passage 15 / clone 2)</strain>
    </source>
</reference>
<accession>Q9KX62</accession>
<proteinExistence type="inferred from homology"/>
<keyword id="KW-0067">ATP-binding</keyword>
<keyword id="KW-0963">Cytoplasm</keyword>
<keyword id="KW-0418">Kinase</keyword>
<keyword id="KW-0547">Nucleotide-binding</keyword>
<keyword id="KW-1185">Reference proteome</keyword>
<keyword id="KW-0808">Transferase</keyword>
<protein>
    <recommendedName>
        <fullName>Guanylate kinase</fullName>
        <ecNumber>2.7.4.8</ecNumber>
    </recommendedName>
    <alternativeName>
        <fullName>GMP kinase</fullName>
    </alternativeName>
</protein>